<proteinExistence type="evidence at protein level"/>
<feature type="chain" id="PRO_0000132250" description="Protein LATERAL ORGAN BOUNDARIES">
    <location>
        <begin position="1"/>
        <end position="186"/>
    </location>
</feature>
<feature type="domain" description="LOB" evidence="1">
    <location>
        <begin position="10"/>
        <end position="111"/>
    </location>
</feature>
<name>LOB_ARATH</name>
<accession>Q9FML4</accession>
<accession>B7XG58</accession>
<accession>Q549W6</accession>
<accession>Q8VWF4</accession>
<sequence>MASSSNSYNSPCAACKFLRRKCMPGCIFAPYFPPEEPHKFANVHKIFGASNVTKLLNELLPHQREDAVNSLAYEAEARVRDPVYGCVGAISYLQRQVHRLQKELDAANADLAHYGLSTSAAGAPGNVVDLVFQPQPLPSQQLPPLNPVYRLSGASPVMNQMPRGTGGSYGTFLPWNNGHDQQGGNM</sequence>
<dbReference type="EMBL" id="AF447897">
    <property type="protein sequence ID" value="AAL40346.1"/>
    <property type="molecule type" value="mRNA"/>
</dbReference>
<dbReference type="EMBL" id="AF447898">
    <property type="protein sequence ID" value="AAL40347.1"/>
    <property type="molecule type" value="mRNA"/>
</dbReference>
<dbReference type="EMBL" id="AF447899">
    <property type="protein sequence ID" value="AAL40348.1"/>
    <property type="molecule type" value="mRNA"/>
</dbReference>
<dbReference type="EMBL" id="AF447900">
    <property type="protein sequence ID" value="AAL40349.1"/>
    <property type="molecule type" value="mRNA"/>
</dbReference>
<dbReference type="EMBL" id="AB164305">
    <property type="protein sequence ID" value="BAD12424.1"/>
    <property type="molecule type" value="mRNA"/>
</dbReference>
<dbReference type="EMBL" id="AB473837">
    <property type="protein sequence ID" value="BAH10548.1"/>
    <property type="molecule type" value="mRNA"/>
</dbReference>
<dbReference type="EMBL" id="AB008265">
    <property type="protein sequence ID" value="BAB10551.1"/>
    <property type="molecule type" value="Genomic_DNA"/>
</dbReference>
<dbReference type="EMBL" id="CP002688">
    <property type="protein sequence ID" value="AED97700.1"/>
    <property type="molecule type" value="Genomic_DNA"/>
</dbReference>
<dbReference type="EMBL" id="CP002688">
    <property type="protein sequence ID" value="AED97701.1"/>
    <property type="molecule type" value="Genomic_DNA"/>
</dbReference>
<dbReference type="EMBL" id="CP002688">
    <property type="protein sequence ID" value="AED97702.1"/>
    <property type="molecule type" value="Genomic_DNA"/>
</dbReference>
<dbReference type="EMBL" id="CP002688">
    <property type="protein sequence ID" value="AED97703.1"/>
    <property type="molecule type" value="Genomic_DNA"/>
</dbReference>
<dbReference type="EMBL" id="BT025745">
    <property type="protein sequence ID" value="ABF83635.1"/>
    <property type="molecule type" value="mRNA"/>
</dbReference>
<dbReference type="RefSeq" id="NP_201114.1">
    <property type="nucleotide sequence ID" value="NM_125703.4"/>
</dbReference>
<dbReference type="RefSeq" id="NP_851252.1">
    <property type="nucleotide sequence ID" value="NM_180921.2"/>
</dbReference>
<dbReference type="RefSeq" id="NP_851253.1">
    <property type="nucleotide sequence ID" value="NM_180922.1"/>
</dbReference>
<dbReference type="RefSeq" id="NP_851254.1">
    <property type="nucleotide sequence ID" value="NM_180923.1"/>
</dbReference>
<dbReference type="SMR" id="Q9FML4"/>
<dbReference type="BioGRID" id="21672">
    <property type="interactions" value="17"/>
</dbReference>
<dbReference type="FunCoup" id="Q9FML4">
    <property type="interactions" value="99"/>
</dbReference>
<dbReference type="IntAct" id="Q9FML4">
    <property type="interactions" value="12"/>
</dbReference>
<dbReference type="STRING" id="3702.Q9FML4"/>
<dbReference type="PaxDb" id="3702-AT5G63090.3"/>
<dbReference type="ProteomicsDB" id="238414"/>
<dbReference type="EnsemblPlants" id="AT5G63090.1">
    <property type="protein sequence ID" value="AT5G63090.1"/>
    <property type="gene ID" value="AT5G63090"/>
</dbReference>
<dbReference type="EnsemblPlants" id="AT5G63090.2">
    <property type="protein sequence ID" value="AT5G63090.2"/>
    <property type="gene ID" value="AT5G63090"/>
</dbReference>
<dbReference type="EnsemblPlants" id="AT5G63090.3">
    <property type="protein sequence ID" value="AT5G63090.3"/>
    <property type="gene ID" value="AT5G63090"/>
</dbReference>
<dbReference type="EnsemblPlants" id="AT5G63090.4">
    <property type="protein sequence ID" value="AT5G63090.4"/>
    <property type="gene ID" value="AT5G63090"/>
</dbReference>
<dbReference type="GeneID" id="836429"/>
<dbReference type="Gramene" id="AT5G63090.1">
    <property type="protein sequence ID" value="AT5G63090.1"/>
    <property type="gene ID" value="AT5G63090"/>
</dbReference>
<dbReference type="Gramene" id="AT5G63090.2">
    <property type="protein sequence ID" value="AT5G63090.2"/>
    <property type="gene ID" value="AT5G63090"/>
</dbReference>
<dbReference type="Gramene" id="AT5G63090.3">
    <property type="protein sequence ID" value="AT5G63090.3"/>
    <property type="gene ID" value="AT5G63090"/>
</dbReference>
<dbReference type="Gramene" id="AT5G63090.4">
    <property type="protein sequence ID" value="AT5G63090.4"/>
    <property type="gene ID" value="AT5G63090"/>
</dbReference>
<dbReference type="KEGG" id="ath:AT5G63090"/>
<dbReference type="Araport" id="AT5G63090"/>
<dbReference type="TAIR" id="AT5G63090">
    <property type="gene designation" value="LOB"/>
</dbReference>
<dbReference type="eggNOG" id="ENOG502RXGG">
    <property type="taxonomic scope" value="Eukaryota"/>
</dbReference>
<dbReference type="HOGENOM" id="CLU_058353_5_2_1"/>
<dbReference type="InParanoid" id="Q9FML4"/>
<dbReference type="OMA" id="WSANMAG"/>
<dbReference type="PhylomeDB" id="Q9FML4"/>
<dbReference type="PRO" id="PR:Q9FML4"/>
<dbReference type="Proteomes" id="UP000006548">
    <property type="component" value="Chromosome 5"/>
</dbReference>
<dbReference type="ExpressionAtlas" id="Q9FML4">
    <property type="expression patterns" value="baseline and differential"/>
</dbReference>
<dbReference type="GO" id="GO:0000976">
    <property type="term" value="F:transcription cis-regulatory region binding"/>
    <property type="evidence" value="ECO:0000353"/>
    <property type="project" value="TAIR"/>
</dbReference>
<dbReference type="GO" id="GO:0010199">
    <property type="term" value="P:organ boundary specification between lateral organs and the meristem"/>
    <property type="evidence" value="ECO:0000315"/>
    <property type="project" value="TAIR"/>
</dbReference>
<dbReference type="InterPro" id="IPR004883">
    <property type="entry name" value="LOB"/>
</dbReference>
<dbReference type="PANTHER" id="PTHR31301">
    <property type="entry name" value="LOB DOMAIN-CONTAINING PROTEIN 4-RELATED"/>
    <property type="match status" value="1"/>
</dbReference>
<dbReference type="PANTHER" id="PTHR31301:SF91">
    <property type="entry name" value="PROTEIN LATERAL ORGAN BOUNDARIES"/>
    <property type="match status" value="1"/>
</dbReference>
<dbReference type="Pfam" id="PF03195">
    <property type="entry name" value="LOB"/>
    <property type="match status" value="1"/>
</dbReference>
<dbReference type="PROSITE" id="PS50891">
    <property type="entry name" value="LOB"/>
    <property type="match status" value="1"/>
</dbReference>
<comment type="function">
    <text>Not known; ectopic expression of LOB leads to alterations in the size and shape of leaves and floral organs and causes male and female sterility.</text>
</comment>
<comment type="interaction">
    <interactant intactId="EBI-15194891">
        <id>Q9FML4</id>
    </interactant>
    <interactant intactId="EBI-15194889">
        <id>Q3EAI1-2</id>
        <label>BHLH60</label>
    </interactant>
    <organismsDiffer>false</organismsDiffer>
    <experiments>3</experiments>
</comment>
<comment type="interaction">
    <interactant intactId="EBI-15194891">
        <id>Q9FML4</id>
    </interactant>
    <interactant intactId="EBI-4432427">
        <id>Q9AT61</id>
        <label>LBD13</label>
    </interactant>
    <organismsDiffer>false</organismsDiffer>
    <experiments>3</experiments>
</comment>
<comment type="interaction">
    <interactant intactId="EBI-15194891">
        <id>Q9FML4</id>
    </interactant>
    <interactant intactId="EBI-4445715">
        <id>Q9SHE9</id>
        <label>LBD4</label>
    </interactant>
    <organismsDiffer>false</organismsDiffer>
    <experiments>3</experiments>
</comment>
<comment type="interaction">
    <interactant intactId="EBI-15194891">
        <id>Q9FML4</id>
    </interactant>
    <interactant intactId="EBI-15192325">
        <id>Q8LPR5</id>
        <label>TCP4</label>
    </interactant>
    <organismsDiffer>false</organismsDiffer>
    <experiments>3</experiments>
</comment>
<comment type="tissue specificity">
    <text evidence="3">Expressed in a band of cells at the adaxial base of all lateral organs formed from the shoot apical meristem and at the base of lateral roots.</text>
</comment>
<comment type="induction">
    <text evidence="2">Positively regulated within the shoot apex by both ASYMMETRIC LEAVES 1 (AS1) and ASYMMETRIC LEAVES 2 (AS2/LBD6) and by KNAT1.</text>
</comment>
<comment type="similarity">
    <text evidence="4">Belongs to the LOB domain-containing protein family.</text>
</comment>
<evidence type="ECO:0000255" key="1">
    <source>
        <dbReference type="PROSITE-ProRule" id="PRU00291"/>
    </source>
</evidence>
<evidence type="ECO:0000269" key="2">
    <source>
    </source>
</evidence>
<evidence type="ECO:0000269" key="3">
    <source>
    </source>
</evidence>
<evidence type="ECO:0000305" key="4"/>
<protein>
    <recommendedName>
        <fullName>Protein LATERAL ORGAN BOUNDARIES</fullName>
    </recommendedName>
    <alternativeName>
        <fullName>ASYMMETRIC LEAVES 2-like protein 4</fullName>
        <shortName>AS2-like protein 4</shortName>
    </alternativeName>
</protein>
<organism>
    <name type="scientific">Arabidopsis thaliana</name>
    <name type="common">Mouse-ear cress</name>
    <dbReference type="NCBI Taxonomy" id="3702"/>
    <lineage>
        <taxon>Eukaryota</taxon>
        <taxon>Viridiplantae</taxon>
        <taxon>Streptophyta</taxon>
        <taxon>Embryophyta</taxon>
        <taxon>Tracheophyta</taxon>
        <taxon>Spermatophyta</taxon>
        <taxon>Magnoliopsida</taxon>
        <taxon>eudicotyledons</taxon>
        <taxon>Gunneridae</taxon>
        <taxon>Pentapetalae</taxon>
        <taxon>rosids</taxon>
        <taxon>malvids</taxon>
        <taxon>Brassicales</taxon>
        <taxon>Brassicaceae</taxon>
        <taxon>Camelineae</taxon>
        <taxon>Arabidopsis</taxon>
    </lineage>
</organism>
<reference key="1">
    <citation type="journal article" date="2002" name="Plant Physiol.">
        <title>The LATERAL ORGAN BOUNDARIES gene defines a novel, plant-specific gene family.</title>
        <authorList>
            <person name="Shuai B."/>
            <person name="Reynaga-Pena C.G."/>
            <person name="Springer P.S."/>
        </authorList>
    </citation>
    <scope>NUCLEOTIDE SEQUENCE [MRNA]</scope>
    <scope>TISSUE SPECIFICITY</scope>
    <scope>GENE FAMILY</scope>
    <scope>NOMENCLATURE</scope>
    <source>
        <strain>cv. Landsberg erecta</strain>
    </source>
</reference>
<reference key="2">
    <citation type="journal article" date="2002" name="Plant Cell Physiol.">
        <title>The ASYMMETRIC LEAVES2 gene of Arabidopsis thaliana, required for formation of a symmetric flat leaf lamina, encodes a member of a novel family of proteins characterized by cysteine repeats and a leucine zipper.</title>
        <authorList>
            <person name="Iwakawa H."/>
            <person name="Ueno Y."/>
            <person name="Semiarti E."/>
            <person name="Onouchi H."/>
            <person name="Kojima S."/>
            <person name="Tsukaya H."/>
            <person name="Hasebe M."/>
            <person name="Soma T."/>
            <person name="Ikezaki M."/>
            <person name="Machida C."/>
            <person name="Machida Y."/>
        </authorList>
    </citation>
    <scope>NUCLEOTIDE SEQUENCE [MRNA]</scope>
    <scope>GENE FAMILY</scope>
    <scope>NOMENCLATURE</scope>
</reference>
<reference key="3">
    <citation type="journal article" date="2009" name="Plant J.">
        <title>Characterization of genes in the ASYMMETRIC LEAVES2/LATERAL ORGAN BOUNDARIES (AS2/LOB) family in Arabidopsis thaliana, and functional and molecular comparisons between AS2 and other family members.</title>
        <authorList>
            <person name="Matsumura Y."/>
            <person name="Iwakawa H."/>
            <person name="Machida Y."/>
            <person name="Machida C."/>
        </authorList>
    </citation>
    <scope>NUCLEOTIDE SEQUENCE [MRNA]</scope>
    <source>
        <strain>cv. Columbia</strain>
    </source>
</reference>
<reference key="4">
    <citation type="journal article" date="1997" name="DNA Res.">
        <title>Structural analysis of Arabidopsis thaliana chromosome 5. III. Sequence features of the regions of 1,191,918 bp covered by seventeen physically assigned P1 clones.</title>
        <authorList>
            <person name="Nakamura Y."/>
            <person name="Sato S."/>
            <person name="Kaneko T."/>
            <person name="Kotani H."/>
            <person name="Asamizu E."/>
            <person name="Miyajima N."/>
            <person name="Tabata S."/>
        </authorList>
    </citation>
    <scope>NUCLEOTIDE SEQUENCE [LARGE SCALE GENOMIC DNA]</scope>
    <source>
        <strain>cv. Columbia</strain>
    </source>
</reference>
<reference key="5">
    <citation type="journal article" date="2017" name="Plant J.">
        <title>Araport11: a complete reannotation of the Arabidopsis thaliana reference genome.</title>
        <authorList>
            <person name="Cheng C.Y."/>
            <person name="Krishnakumar V."/>
            <person name="Chan A.P."/>
            <person name="Thibaud-Nissen F."/>
            <person name="Schobel S."/>
            <person name="Town C.D."/>
        </authorList>
    </citation>
    <scope>GENOME REANNOTATION</scope>
    <source>
        <strain>cv. Columbia</strain>
    </source>
</reference>
<reference key="6">
    <citation type="submission" date="2006-06" db="EMBL/GenBank/DDBJ databases">
        <title>Arabidopsis ORF clones.</title>
        <authorList>
            <person name="Kim C.J."/>
            <person name="Chen H."/>
            <person name="Quinitio C."/>
            <person name="Shinn P."/>
            <person name="Ecker J.R."/>
        </authorList>
    </citation>
    <scope>NUCLEOTIDE SEQUENCE [LARGE SCALE MRNA]</scope>
    <source>
        <strain>cv. Columbia</strain>
    </source>
</reference>
<reference key="7">
    <citation type="journal article" date="2002" name="Development">
        <title>ASYMMETRIC LEAVES1 reveals knox gene redundancy in Arabidopsis.</title>
        <authorList>
            <person name="Byrne M.E."/>
            <person name="Simorowski J."/>
            <person name="Martienssen R.A."/>
        </authorList>
    </citation>
    <scope>INDUCTION</scope>
</reference>
<gene>
    <name type="primary">LOB</name>
    <name type="synonym">ASL4</name>
    <name type="ordered locus">At5g63090</name>
    <name type="ORF">MDC12.5</name>
</gene>
<keyword id="KW-0217">Developmental protein</keyword>
<keyword id="KW-1185">Reference proteome</keyword>